<organism>
    <name type="scientific">Bartonella henselae (strain ATCC 49882 / DSM 28221 / CCUG 30454 / Houston 1)</name>
    <name type="common">Rochalimaea henselae</name>
    <dbReference type="NCBI Taxonomy" id="283166"/>
    <lineage>
        <taxon>Bacteria</taxon>
        <taxon>Pseudomonadati</taxon>
        <taxon>Pseudomonadota</taxon>
        <taxon>Alphaproteobacteria</taxon>
        <taxon>Hyphomicrobiales</taxon>
        <taxon>Bartonellaceae</taxon>
        <taxon>Bartonella</taxon>
    </lineage>
</organism>
<proteinExistence type="inferred from homology"/>
<feature type="chain" id="PRO_0000130357" description="Large ribosomal subunit protein uL29">
    <location>
        <begin position="1"/>
        <end position="66"/>
    </location>
</feature>
<keyword id="KW-0687">Ribonucleoprotein</keyword>
<keyword id="KW-0689">Ribosomal protein</keyword>
<dbReference type="EMBL" id="BX897699">
    <property type="protein sequence ID" value="CAF27834.1"/>
    <property type="molecule type" value="Genomic_DNA"/>
</dbReference>
<dbReference type="RefSeq" id="WP_011180906.1">
    <property type="nucleotide sequence ID" value="NZ_LRIJ02000001.1"/>
</dbReference>
<dbReference type="SMR" id="Q6G2X3"/>
<dbReference type="PaxDb" id="283166-BH10430"/>
<dbReference type="EnsemblBacteria" id="CAF27834">
    <property type="protein sequence ID" value="CAF27834"/>
    <property type="gene ID" value="BH10430"/>
</dbReference>
<dbReference type="GeneID" id="92985271"/>
<dbReference type="KEGG" id="bhe:BH10430"/>
<dbReference type="eggNOG" id="COG0255">
    <property type="taxonomic scope" value="Bacteria"/>
</dbReference>
<dbReference type="OrthoDB" id="9815192at2"/>
<dbReference type="Proteomes" id="UP000000421">
    <property type="component" value="Chromosome"/>
</dbReference>
<dbReference type="GO" id="GO:0022625">
    <property type="term" value="C:cytosolic large ribosomal subunit"/>
    <property type="evidence" value="ECO:0007669"/>
    <property type="project" value="TreeGrafter"/>
</dbReference>
<dbReference type="GO" id="GO:0003735">
    <property type="term" value="F:structural constituent of ribosome"/>
    <property type="evidence" value="ECO:0007669"/>
    <property type="project" value="InterPro"/>
</dbReference>
<dbReference type="GO" id="GO:0006412">
    <property type="term" value="P:translation"/>
    <property type="evidence" value="ECO:0007669"/>
    <property type="project" value="UniProtKB-UniRule"/>
</dbReference>
<dbReference type="CDD" id="cd00427">
    <property type="entry name" value="Ribosomal_L29_HIP"/>
    <property type="match status" value="1"/>
</dbReference>
<dbReference type="Gene3D" id="6.10.140.1970">
    <property type="match status" value="1"/>
</dbReference>
<dbReference type="HAMAP" id="MF_00374">
    <property type="entry name" value="Ribosomal_uL29"/>
    <property type="match status" value="1"/>
</dbReference>
<dbReference type="InterPro" id="IPR050063">
    <property type="entry name" value="Ribosomal_protein_uL29"/>
</dbReference>
<dbReference type="InterPro" id="IPR001854">
    <property type="entry name" value="Ribosomal_uL29"/>
</dbReference>
<dbReference type="InterPro" id="IPR036049">
    <property type="entry name" value="Ribosomal_uL29_sf"/>
</dbReference>
<dbReference type="NCBIfam" id="TIGR00012">
    <property type="entry name" value="L29"/>
    <property type="match status" value="1"/>
</dbReference>
<dbReference type="PANTHER" id="PTHR10916">
    <property type="entry name" value="60S RIBOSOMAL PROTEIN L35/50S RIBOSOMAL PROTEIN L29"/>
    <property type="match status" value="1"/>
</dbReference>
<dbReference type="PANTHER" id="PTHR10916:SF0">
    <property type="entry name" value="LARGE RIBOSOMAL SUBUNIT PROTEIN UL29C"/>
    <property type="match status" value="1"/>
</dbReference>
<dbReference type="Pfam" id="PF00831">
    <property type="entry name" value="Ribosomal_L29"/>
    <property type="match status" value="1"/>
</dbReference>
<dbReference type="SUPFAM" id="SSF46561">
    <property type="entry name" value="Ribosomal protein L29 (L29p)"/>
    <property type="match status" value="1"/>
</dbReference>
<name>RL29_BARHE</name>
<reference key="1">
    <citation type="journal article" date="2004" name="Proc. Natl. Acad. Sci. U.S.A.">
        <title>The louse-borne human pathogen Bartonella quintana is a genomic derivative of the zoonotic agent Bartonella henselae.</title>
        <authorList>
            <person name="Alsmark U.C.M."/>
            <person name="Frank A.C."/>
            <person name="Karlberg E.O."/>
            <person name="Legault B.-A."/>
            <person name="Ardell D.H."/>
            <person name="Canbaeck B."/>
            <person name="Eriksson A.-S."/>
            <person name="Naeslund A.K."/>
            <person name="Handley S.A."/>
            <person name="Huvet M."/>
            <person name="La Scola B."/>
            <person name="Holmberg M."/>
            <person name="Andersson S.G.E."/>
        </authorList>
    </citation>
    <scope>NUCLEOTIDE SEQUENCE [LARGE SCALE GENOMIC DNA]</scope>
    <source>
        <strain>ATCC 49882 / DSM 28221 / CCUG 30454 / Houston 1</strain>
    </source>
</reference>
<evidence type="ECO:0000255" key="1">
    <source>
        <dbReference type="HAMAP-Rule" id="MF_00374"/>
    </source>
</evidence>
<evidence type="ECO:0000305" key="2"/>
<comment type="similarity">
    <text evidence="1">Belongs to the universal ribosomal protein uL29 family.</text>
</comment>
<protein>
    <recommendedName>
        <fullName evidence="1">Large ribosomal subunit protein uL29</fullName>
    </recommendedName>
    <alternativeName>
        <fullName evidence="2">50S ribosomal protein L29</fullName>
    </alternativeName>
</protein>
<gene>
    <name evidence="1" type="primary">rpmC</name>
    <name type="ordered locus">BH10430</name>
</gene>
<accession>Q6G2X3</accession>
<sequence>MRARELRAQTLDQMKDELVKLKKEQFNLRFQKATGQLEKVSRVKQVRRDIARVKTFLRQKINENKV</sequence>